<proteinExistence type="inferred from homology"/>
<gene>
    <name type="ordered locus">SPs1571</name>
</gene>
<keyword id="KW-0963">Cytoplasm</keyword>
<accession>P0DH03</accession>
<accession>P60421</accession>
<accession>Q9A191</accession>
<comment type="subcellular location">
    <subcellularLocation>
        <location evidence="1">Cytoplasm</location>
    </subcellularLocation>
</comment>
<comment type="similarity">
    <text evidence="1">Belongs to the UPF0298 family.</text>
</comment>
<name>Y288_STRPQ</name>
<organism>
    <name type="scientific">Streptococcus pyogenes serotype M3 (strain SSI-1)</name>
    <dbReference type="NCBI Taxonomy" id="193567"/>
    <lineage>
        <taxon>Bacteria</taxon>
        <taxon>Bacillati</taxon>
        <taxon>Bacillota</taxon>
        <taxon>Bacilli</taxon>
        <taxon>Lactobacillales</taxon>
        <taxon>Streptococcaceae</taxon>
        <taxon>Streptococcus</taxon>
    </lineage>
</organism>
<protein>
    <recommendedName>
        <fullName evidence="1">UPF0298 protein SPs1571</fullName>
    </recommendedName>
</protein>
<evidence type="ECO:0000255" key="1">
    <source>
        <dbReference type="HAMAP-Rule" id="MF_01126"/>
    </source>
</evidence>
<reference key="1">
    <citation type="journal article" date="2003" name="Genome Res.">
        <title>Genome sequence of an M3 strain of Streptococcus pyogenes reveals a large-scale genomic rearrangement in invasive strains and new insights into phage evolution.</title>
        <authorList>
            <person name="Nakagawa I."/>
            <person name="Kurokawa K."/>
            <person name="Yamashita A."/>
            <person name="Nakata M."/>
            <person name="Tomiyasu Y."/>
            <person name="Okahashi N."/>
            <person name="Kawabata S."/>
            <person name="Yamazaki K."/>
            <person name="Shiba T."/>
            <person name="Yasunaga T."/>
            <person name="Hayashi H."/>
            <person name="Hattori M."/>
            <person name="Hamada S."/>
        </authorList>
    </citation>
    <scope>NUCLEOTIDE SEQUENCE [LARGE SCALE GENOMIC DNA]</scope>
    <source>
        <strain>SSI-1</strain>
    </source>
</reference>
<sequence length="91" mass="11103">MFQKQERIGLVVYLYYNRDARKLSKFGDLYYHSKRSRYLIIYINKNDLDTKLEEMRRLKCVKDIRPSAFDDIDRQFVGNLHRDETNNHQKG</sequence>
<feature type="chain" id="PRO_0000411641" description="UPF0298 protein SPs1571">
    <location>
        <begin position="1"/>
        <end position="91"/>
    </location>
</feature>
<dbReference type="EMBL" id="BA000034">
    <property type="protein sequence ID" value="BAC64666.1"/>
    <property type="molecule type" value="Genomic_DNA"/>
</dbReference>
<dbReference type="RefSeq" id="WP_002985847.1">
    <property type="nucleotide sequence ID" value="NC_004606.1"/>
</dbReference>
<dbReference type="SMR" id="P0DH03"/>
<dbReference type="KEGG" id="sps:SPs1571"/>
<dbReference type="HOGENOM" id="CLU_159890_1_0_9"/>
<dbReference type="GO" id="GO:0005737">
    <property type="term" value="C:cytoplasm"/>
    <property type="evidence" value="ECO:0007669"/>
    <property type="project" value="UniProtKB-SubCell"/>
</dbReference>
<dbReference type="HAMAP" id="MF_01126">
    <property type="entry name" value="UPF0298"/>
    <property type="match status" value="1"/>
</dbReference>
<dbReference type="InterPro" id="IPR016979">
    <property type="entry name" value="DUF2129"/>
</dbReference>
<dbReference type="NCBIfam" id="NF002631">
    <property type="entry name" value="PRK02302.1"/>
    <property type="match status" value="1"/>
</dbReference>
<dbReference type="Pfam" id="PF09902">
    <property type="entry name" value="DUF2129"/>
    <property type="match status" value="1"/>
</dbReference>
<dbReference type="PIRSF" id="PIRSF031653">
    <property type="entry name" value="UCP031653"/>
    <property type="match status" value="1"/>
</dbReference>